<dbReference type="EC" id="6.5.1.8" evidence="6 8 9"/>
<dbReference type="EMBL" id="U18997">
    <property type="protein sequence ID" value="AAA58219.1"/>
    <property type="molecule type" value="Genomic_DNA"/>
</dbReference>
<dbReference type="EMBL" id="U00096">
    <property type="protein sequence ID" value="AAC76446.1"/>
    <property type="molecule type" value="Genomic_DNA"/>
</dbReference>
<dbReference type="EMBL" id="AP009048">
    <property type="protein sequence ID" value="BAE77871.1"/>
    <property type="molecule type" value="Genomic_DNA"/>
</dbReference>
<dbReference type="PIR" id="H65137">
    <property type="entry name" value="H65137"/>
</dbReference>
<dbReference type="RefSeq" id="NP_417879.1">
    <property type="nucleotide sequence ID" value="NC_000913.3"/>
</dbReference>
<dbReference type="RefSeq" id="WP_001105504.1">
    <property type="nucleotide sequence ID" value="NZ_SSZK01000008.1"/>
</dbReference>
<dbReference type="SMR" id="P46850"/>
<dbReference type="BioGRID" id="4261188">
    <property type="interactions" value="29"/>
</dbReference>
<dbReference type="FunCoup" id="P46850">
    <property type="interactions" value="643"/>
</dbReference>
<dbReference type="IntAct" id="P46850">
    <property type="interactions" value="20"/>
</dbReference>
<dbReference type="STRING" id="511145.b3421"/>
<dbReference type="PaxDb" id="511145-b3421"/>
<dbReference type="EnsemblBacteria" id="AAC76446">
    <property type="protein sequence ID" value="AAC76446"/>
    <property type="gene ID" value="b3421"/>
</dbReference>
<dbReference type="GeneID" id="947929"/>
<dbReference type="KEGG" id="ecj:JW3384"/>
<dbReference type="KEGG" id="eco:b3421"/>
<dbReference type="KEGG" id="ecoc:C3026_18550"/>
<dbReference type="PATRIC" id="fig|511145.12.peg.3516"/>
<dbReference type="EchoBASE" id="EB2774"/>
<dbReference type="eggNOG" id="COG1690">
    <property type="taxonomic scope" value="Bacteria"/>
</dbReference>
<dbReference type="HOGENOM" id="CLU_022279_1_1_6"/>
<dbReference type="InParanoid" id="P46850"/>
<dbReference type="OMA" id="QTRGVEC"/>
<dbReference type="OrthoDB" id="9802323at2"/>
<dbReference type="PhylomeDB" id="P46850"/>
<dbReference type="BioCyc" id="EcoCyc:G7751-MONOMER"/>
<dbReference type="BioCyc" id="MetaCyc:G7751-MONOMER"/>
<dbReference type="BRENDA" id="6.5.1.4">
    <property type="organism ID" value="2026"/>
</dbReference>
<dbReference type="BRENDA" id="6.5.1.8">
    <property type="organism ID" value="2026"/>
</dbReference>
<dbReference type="PRO" id="PR:P46850"/>
<dbReference type="Proteomes" id="UP000000625">
    <property type="component" value="Chromosome"/>
</dbReference>
<dbReference type="GO" id="GO:0003909">
    <property type="term" value="F:DNA ligase activity"/>
    <property type="evidence" value="ECO:0000314"/>
    <property type="project" value="EcoCyc"/>
</dbReference>
<dbReference type="GO" id="GO:0005525">
    <property type="term" value="F:GTP binding"/>
    <property type="evidence" value="ECO:0007669"/>
    <property type="project" value="UniProtKB-KW"/>
</dbReference>
<dbReference type="GO" id="GO:0030145">
    <property type="term" value="F:manganese ion binding"/>
    <property type="evidence" value="ECO:0000314"/>
    <property type="project" value="UniProtKB"/>
</dbReference>
<dbReference type="GO" id="GO:0170057">
    <property type="term" value="F:RNA ligase (GTP) activity"/>
    <property type="evidence" value="ECO:0007669"/>
    <property type="project" value="UniProtKB-EC"/>
</dbReference>
<dbReference type="GO" id="GO:0006974">
    <property type="term" value="P:DNA damage response"/>
    <property type="evidence" value="ECO:0000314"/>
    <property type="project" value="UniProtKB"/>
</dbReference>
<dbReference type="GO" id="GO:0006281">
    <property type="term" value="P:DNA repair"/>
    <property type="evidence" value="ECO:0000314"/>
    <property type="project" value="UniProtKB"/>
</dbReference>
<dbReference type="GO" id="GO:0006396">
    <property type="term" value="P:RNA processing"/>
    <property type="evidence" value="ECO:0000314"/>
    <property type="project" value="UniProtKB"/>
</dbReference>
<dbReference type="GO" id="GO:0042245">
    <property type="term" value="P:RNA repair"/>
    <property type="evidence" value="ECO:0000269"/>
    <property type="project" value="EcoCyc"/>
</dbReference>
<dbReference type="FunFam" id="3.90.1860.10:FF:000002">
    <property type="entry name" value="RNA-splicing ligase RtcB"/>
    <property type="match status" value="1"/>
</dbReference>
<dbReference type="Gene3D" id="3.90.1860.10">
    <property type="entry name" value="tRNA-splicing ligase RtcB"/>
    <property type="match status" value="1"/>
</dbReference>
<dbReference type="InterPro" id="IPR001233">
    <property type="entry name" value="RtcB"/>
</dbReference>
<dbReference type="InterPro" id="IPR052915">
    <property type="entry name" value="RtcB-like"/>
</dbReference>
<dbReference type="InterPro" id="IPR036025">
    <property type="entry name" value="RtcB-like_sf"/>
</dbReference>
<dbReference type="PANTHER" id="PTHR43749">
    <property type="entry name" value="RNA-SPLICING LIGASE RTCB"/>
    <property type="match status" value="1"/>
</dbReference>
<dbReference type="PANTHER" id="PTHR43749:SF2">
    <property type="entry name" value="RNA-SPLICING LIGASE RTCB"/>
    <property type="match status" value="1"/>
</dbReference>
<dbReference type="Pfam" id="PF01139">
    <property type="entry name" value="RtcB"/>
    <property type="match status" value="1"/>
</dbReference>
<dbReference type="SUPFAM" id="SSF103365">
    <property type="entry name" value="Hypothetical protein PH1602"/>
    <property type="match status" value="1"/>
</dbReference>
<dbReference type="PROSITE" id="PS01288">
    <property type="entry name" value="UPF0027"/>
    <property type="match status" value="1"/>
</dbReference>
<keyword id="KW-0342">GTP-binding</keyword>
<keyword id="KW-0436">Ligase</keyword>
<keyword id="KW-0464">Manganese</keyword>
<keyword id="KW-0479">Metal-binding</keyword>
<keyword id="KW-0547">Nucleotide-binding</keyword>
<keyword id="KW-1185">Reference proteome</keyword>
<keyword id="KW-0692">RNA repair</keyword>
<protein>
    <recommendedName>
        <fullName evidence="12">RNA-splicing ligase RtcB</fullName>
        <ecNumber evidence="6 8 9">6.5.1.8</ecNumber>
    </recommendedName>
    <alternativeName>
        <fullName evidence="12">3'-phosphate/5'-hydroxy nucleic acid ligase</fullName>
    </alternativeName>
</protein>
<proteinExistence type="evidence at protein level"/>
<name>RTCB_ECOLI</name>
<feature type="chain" id="PRO_0000215109" description="RNA-splicing ligase RtcB">
    <location>
        <begin position="1"/>
        <end position="408"/>
    </location>
</feature>
<feature type="active site" description="GMP-histidine intermediate" evidence="6">
    <location>
        <position position="337"/>
    </location>
</feature>
<feature type="binding site" evidence="1">
    <location>
        <position position="75"/>
    </location>
    <ligand>
        <name>Mn(2+)</name>
        <dbReference type="ChEBI" id="CHEBI:29035"/>
        <label>1</label>
    </ligand>
</feature>
<feature type="binding site" evidence="1">
    <location>
        <position position="78"/>
    </location>
    <ligand>
        <name>Mn(2+)</name>
        <dbReference type="ChEBI" id="CHEBI:29035"/>
        <label>1</label>
    </ligand>
</feature>
<feature type="binding site" evidence="1">
    <location>
        <position position="78"/>
    </location>
    <ligand>
        <name>Mn(2+)</name>
        <dbReference type="ChEBI" id="CHEBI:29035"/>
        <label>2</label>
    </ligand>
</feature>
<feature type="binding site" evidence="1">
    <location>
        <begin position="167"/>
        <end position="171"/>
    </location>
    <ligand>
        <name>GMP</name>
        <dbReference type="ChEBI" id="CHEBI:58115"/>
    </ligand>
</feature>
<feature type="binding site" evidence="1">
    <location>
        <position position="168"/>
    </location>
    <ligand>
        <name>Mn(2+)</name>
        <dbReference type="ChEBI" id="CHEBI:29035"/>
        <label>1</label>
    </ligand>
</feature>
<feature type="binding site" evidence="1">
    <location>
        <position position="185"/>
    </location>
    <ligand>
        <name>Mn(2+)</name>
        <dbReference type="ChEBI" id="CHEBI:29035"/>
        <label>2</label>
    </ligand>
</feature>
<feature type="binding site" evidence="1">
    <location>
        <begin position="281"/>
        <end position="282"/>
    </location>
    <ligand>
        <name>GMP</name>
        <dbReference type="ChEBI" id="CHEBI:58115"/>
    </ligand>
</feature>
<feature type="binding site" evidence="1">
    <location>
        <position position="281"/>
    </location>
    <ligand>
        <name>Mn(2+)</name>
        <dbReference type="ChEBI" id="CHEBI:29035"/>
        <label>2</label>
    </ligand>
</feature>
<feature type="binding site" evidence="1">
    <location>
        <begin position="313"/>
        <end position="316"/>
    </location>
    <ligand>
        <name>GMP</name>
        <dbReference type="ChEBI" id="CHEBI:58115"/>
    </ligand>
</feature>
<feature type="binding site" evidence="1">
    <location>
        <position position="320"/>
    </location>
    <ligand>
        <name>GMP</name>
        <dbReference type="ChEBI" id="CHEBI:58115"/>
    </ligand>
</feature>
<feature type="binding site" evidence="1">
    <location>
        <begin position="337"/>
        <end position="340"/>
    </location>
    <ligand>
        <name>GMP</name>
        <dbReference type="ChEBI" id="CHEBI:58115"/>
    </ligand>
</feature>
<feature type="binding site" evidence="1">
    <location>
        <position position="407"/>
    </location>
    <ligand>
        <name>GMP</name>
        <dbReference type="ChEBI" id="CHEBI:58115"/>
    </ligand>
</feature>
<feature type="mutagenesis site" description="Almost no guanylation activity. Can ligate pre-guanylated nucleotide substrates." evidence="9">
    <original>D</original>
    <variation>A</variation>
    <location>
        <position position="75"/>
    </location>
</feature>
<feature type="mutagenesis site" description="No activity." evidence="9">
    <original>C</original>
    <variation>A</variation>
    <location>
        <position position="78"/>
    </location>
</feature>
<feature type="mutagenesis site" description="Retains approximately half of overall wild-type activity. Shows increased nucleotide guanylation activity." evidence="9">
    <original>N</original>
    <variation>A</variation>
    <location>
        <position position="167"/>
    </location>
</feature>
<feature type="mutagenesis site" description="Retains approximately half of overall wild-type activity." evidence="9">
    <original>H</original>
    <variation>A</variation>
    <location>
        <position position="168"/>
    </location>
</feature>
<feature type="mutagenesis site" description="Almost wild type activity. Is impaired in DNA 3'-phosphate capping." evidence="9">
    <original>H</original>
    <variation>A</variation>
    <location>
        <position position="185"/>
    </location>
</feature>
<feature type="mutagenesis site" description="Almost wild type activity. Shows increased nucleotide guanylation activity." evidence="9">
    <original>R</original>
    <variation>A</variation>
    <location>
        <position position="189"/>
    </location>
</feature>
<feature type="mutagenesis site" description="Less than 10% of overall wild-type activity. Can ligate pre-guanylated nucleotide substrates." evidence="9">
    <original>H</original>
    <variation>A</variation>
    <location>
        <position position="281"/>
    </location>
</feature>
<feature type="mutagenesis site" description="Retains approximately half of overall wild-type activity." evidence="9">
    <original>K</original>
    <variation>A</variation>
    <location>
        <position position="299"/>
    </location>
</feature>
<feature type="mutagenesis site" description="No overall activity. Abolishes formation of guanylylated RtcB intermediate. Can ligate pre-guanylated nucleotide substrates." evidence="6 9">
    <original>H</original>
    <variation>A</variation>
    <location>
        <position position="337"/>
    </location>
</feature>
<feature type="mutagenesis site" description="Loss of function. Abolishes formation of guanylylated RtcB intermediate." evidence="6">
    <original>H</original>
    <variation>N</variation>
    <variation>Q</variation>
    <location>
        <position position="337"/>
    </location>
</feature>
<feature type="mutagenesis site" description="Less than 10% of overall wild-type activity. Shows increased nucleotide guanylation activity." evidence="9">
    <original>R</original>
    <variation>A</variation>
    <location>
        <position position="341"/>
    </location>
</feature>
<feature type="mutagenesis site" description="Almost wild type activity. Is impaired in DNA 3'-phosphate capping." evidence="9">
    <original>R</original>
    <variation>A</variation>
    <location>
        <position position="345"/>
    </location>
</feature>
<feature type="sequence conflict" description="In Ref. 1; AAA58219." evidence="12" ref="1">
    <original>R</original>
    <variation>G</variation>
    <location>
        <position position="84"/>
    </location>
</feature>
<reference key="1">
    <citation type="journal article" date="1997" name="Science">
        <title>The complete genome sequence of Escherichia coli K-12.</title>
        <authorList>
            <person name="Blattner F.R."/>
            <person name="Plunkett G. III"/>
            <person name="Bloch C.A."/>
            <person name="Perna N.T."/>
            <person name="Burland V."/>
            <person name="Riley M."/>
            <person name="Collado-Vides J."/>
            <person name="Glasner J.D."/>
            <person name="Rode C.K."/>
            <person name="Mayhew G.F."/>
            <person name="Gregor J."/>
            <person name="Davis N.W."/>
            <person name="Kirkpatrick H.A."/>
            <person name="Goeden M.A."/>
            <person name="Rose D.J."/>
            <person name="Mau B."/>
            <person name="Shao Y."/>
        </authorList>
    </citation>
    <scope>NUCLEOTIDE SEQUENCE [LARGE SCALE GENOMIC DNA]</scope>
    <source>
        <strain>K12 / MG1655 / ATCC 47076</strain>
    </source>
</reference>
<reference key="2">
    <citation type="journal article" date="2006" name="Mol. Syst. Biol.">
        <title>Highly accurate genome sequences of Escherichia coli K-12 strains MG1655 and W3110.</title>
        <authorList>
            <person name="Hayashi K."/>
            <person name="Morooka N."/>
            <person name="Yamamoto Y."/>
            <person name="Fujita K."/>
            <person name="Isono K."/>
            <person name="Choi S."/>
            <person name="Ohtsubo E."/>
            <person name="Baba T."/>
            <person name="Wanner B.L."/>
            <person name="Mori H."/>
            <person name="Horiuchi T."/>
        </authorList>
    </citation>
    <scope>NUCLEOTIDE SEQUENCE [LARGE SCALE GENOMIC DNA]</scope>
    <source>
        <strain>K12 / W3110 / ATCC 27325 / DSM 5911</strain>
    </source>
</reference>
<reference key="3">
    <citation type="journal article" date="1998" name="J. Biol. Chem.">
        <title>Characterization of the Escherichia coli RNA 3'-terminal phosphate cyclase and its sigma54-regulated operon.</title>
        <authorList>
            <person name="Genschik P."/>
            <person name="Drabikowski K."/>
            <person name="Filipowicz W."/>
        </authorList>
    </citation>
    <scope>GENE NAME</scope>
    <scope>INDUCTION</scope>
</reference>
<reference key="4">
    <citation type="journal article" date="2011" name="J. Biol. Chem.">
        <title>RtcB is the RNA ligase component of an Escherichia coli RNA repair operon.</title>
        <authorList>
            <person name="Tanaka N."/>
            <person name="Shuman S."/>
        </authorList>
    </citation>
    <scope>FUNCTION</scope>
    <scope>SUBUNIT</scope>
    <scope>INDUCTION</scope>
    <source>
        <strain>K12</strain>
    </source>
</reference>
<reference key="5">
    <citation type="journal article" date="2011" name="J. Biol. Chem.">
        <title>RtcB, a novel RNA ligase, can catalyze tRNA splicing and HAC1 mRNA splicing in vivo.</title>
        <authorList>
            <person name="Tanaka N."/>
            <person name="Meineke B."/>
            <person name="Shuman S."/>
        </authorList>
    </citation>
    <scope>FUNCTION</scope>
    <scope>COFACTOR</scope>
</reference>
<reference key="6">
    <citation type="journal article" date="2011" name="J. Biol. Chem.">
        <title>Novel mechanism of RNA repair by RtcB via sequential 2',3'-cyclic phosphodiesterase and 3'-Phosphate/5'-hydroxyl ligation reactions.</title>
        <authorList>
            <person name="Tanaka N."/>
            <person name="Chakravarty A.K."/>
            <person name="Maughan B."/>
            <person name="Shuman S."/>
        </authorList>
    </citation>
    <scope>FUNCTION</scope>
    <scope>CATALYTIC ACTIVITY</scope>
    <scope>COFACTOR</scope>
</reference>
<reference key="7">
    <citation type="journal article" date="2012" name="Nucleic Acids Res.">
        <title>The sequential 2',3'-cyclic phosphodiesterase and 3'-phosphate/5'-OH ligation steps of the RtcB RNA splicing pathway are GTP-dependent.</title>
        <authorList>
            <person name="Chakravarty A.K."/>
            <person name="Shuman S."/>
        </authorList>
    </citation>
    <scope>FUNCTION</scope>
</reference>
<reference key="8">
    <citation type="journal article" date="2012" name="Proc. Natl. Acad. Sci. U.S.A.">
        <title>RNA ligase RtcB splices 3'-phosphate and 5'-OH ends via covalent RtcB-(histidinyl)-GMP and polynucleotide-(3')pp(5')G intermediates.</title>
        <authorList>
            <person name="Chakravarty A.K."/>
            <person name="Subbotin R."/>
            <person name="Chait B.T."/>
            <person name="Shuman S."/>
        </authorList>
    </citation>
    <scope>FUNCTION</scope>
    <scope>CATALYTIC ACTIVITY</scope>
    <scope>IDENTIFICATION BY MASS SPECTROMETRY</scope>
    <scope>ACTIVE SITE</scope>
    <scope>REACTION MECHANISM</scope>
    <scope>MUTAGENESIS OF HIS-337</scope>
</reference>
<reference key="9">
    <citation type="journal article" date="2013" name="Proc. Natl. Acad. Sci. U.S.A.">
        <title>Rewriting the rules for end joining via enzymatic splicing of DNA 3'-PO4 and 5'-OH ends.</title>
        <authorList>
            <person name="Das U."/>
            <person name="Chakravarty A.K."/>
            <person name="Remus B.S."/>
            <person name="Shuman S."/>
        </authorList>
    </citation>
    <scope>FUNCTION</scope>
    <scope>CATALYTIC ACTIVITY</scope>
    <scope>REACTION MECHANISM</scope>
</reference>
<reference key="10">
    <citation type="journal article" date="2016" name="J. Bacteriol.">
        <title>Distinct contributions of enzymic functional groups to the 2',3'-cyclic phosphodiesterase, 3'-phosphate guanylylation, and 3'-ppG/5'-OH ligation steps of the Escherichia coli RtcB nucleic acid splicing pathway.</title>
        <authorList>
            <person name="Maughan W.P."/>
            <person name="Shuman S."/>
        </authorList>
    </citation>
    <scope>FUNCTION</scope>
    <scope>CATALYTIC ACTIVITY</scope>
    <scope>REACTION MECHANISM</scope>
    <scope>MUTAGENESIS OF ASP-75; CYS-78; ASN-167; HIS-168; HIS-185; ARG-189; HIS-281; LYS-299; HIS-337; ARG-341 AND ARG-345</scope>
</reference>
<organism>
    <name type="scientific">Escherichia coli (strain K12)</name>
    <dbReference type="NCBI Taxonomy" id="83333"/>
    <lineage>
        <taxon>Bacteria</taxon>
        <taxon>Pseudomonadati</taxon>
        <taxon>Pseudomonadota</taxon>
        <taxon>Gammaproteobacteria</taxon>
        <taxon>Enterobacterales</taxon>
        <taxon>Enterobacteriaceae</taxon>
        <taxon>Escherichia</taxon>
    </lineage>
</organism>
<accession>P46850</accession>
<accession>P76690</accession>
<accession>Q2M785</accession>
<comment type="function">
    <text evidence="2 3 4 5 6 7 8 9">GTP-dependent RNA ligase that is involved in RNA repair (PubMed:21224389, PubMed:21757685, PubMed:22045815, PubMed:22474365, PubMed:22730297, PubMed:26858100). Joins RNA with 2',3'-cyclic-phosphate or 3'-phosphate ends to RNA with 5'-hydroxy ends (PubMed:21224389, PubMed:21757685, PubMed:22045815, PubMed:22474365, PubMed:22730297, PubMed:26858100). Also acts as a DNA ligase in case of DNA damage by splicing 'dirty' DNA breaks, characterized by 3'-phosphate (or cyclic-phosphate) and 5'-hydroxy ends that cannot be sealed by classical DNA ligases (PubMed:24218597). Repairs tRNA cleaved by colicins D or E5, does not repair damaged 16S rRNA (By similarity).</text>
</comment>
<comment type="function">
    <text evidence="4">Able to catalyze tRNA splicing in vivo in yeast, but bacteria are not known to splice tRNA.</text>
</comment>
<comment type="catalytic activity">
    <reaction evidence="5 6 8 9">
        <text>a 3'-end 3'-phospho-ribonucleotide-RNA + a 5'-end dephospho-ribonucleoside-RNA + GTP = a ribonucleotidyl-ribonucleotide-RNA + GMP + diphosphate</text>
        <dbReference type="Rhea" id="RHEA:68076"/>
        <dbReference type="Rhea" id="RHEA-COMP:10463"/>
        <dbReference type="Rhea" id="RHEA-COMP:13936"/>
        <dbReference type="Rhea" id="RHEA-COMP:17355"/>
        <dbReference type="ChEBI" id="CHEBI:33019"/>
        <dbReference type="ChEBI" id="CHEBI:37565"/>
        <dbReference type="ChEBI" id="CHEBI:58115"/>
        <dbReference type="ChEBI" id="CHEBI:83062"/>
        <dbReference type="ChEBI" id="CHEBI:138284"/>
        <dbReference type="ChEBI" id="CHEBI:173118"/>
        <dbReference type="EC" id="6.5.1.8"/>
    </reaction>
</comment>
<comment type="catalytic activity">
    <reaction evidence="5 6 8 9">
        <text>a 3'-end 2',3'-cyclophospho-ribonucleotide-RNA + a 5'-end dephospho-ribonucleoside-RNA + GTP + H2O = a ribonucleotidyl-ribonucleotide-RNA + GMP + diphosphate + H(+)</text>
        <dbReference type="Rhea" id="RHEA:68080"/>
        <dbReference type="Rhea" id="RHEA-COMP:10464"/>
        <dbReference type="Rhea" id="RHEA-COMP:13936"/>
        <dbReference type="Rhea" id="RHEA-COMP:17355"/>
        <dbReference type="ChEBI" id="CHEBI:15377"/>
        <dbReference type="ChEBI" id="CHEBI:15378"/>
        <dbReference type="ChEBI" id="CHEBI:33019"/>
        <dbReference type="ChEBI" id="CHEBI:37565"/>
        <dbReference type="ChEBI" id="CHEBI:58115"/>
        <dbReference type="ChEBI" id="CHEBI:83064"/>
        <dbReference type="ChEBI" id="CHEBI:138284"/>
        <dbReference type="ChEBI" id="CHEBI:173118"/>
        <dbReference type="EC" id="6.5.1.8"/>
    </reaction>
</comment>
<comment type="cofactor">
    <cofactor evidence="4 5">
        <name>Mn(2+)</name>
        <dbReference type="ChEBI" id="CHEBI:29035"/>
    </cofactor>
    <text evidence="1">Binds 2 manganese ions per subunit.</text>
</comment>
<comment type="subunit">
    <text evidence="3">Monomer.</text>
</comment>
<comment type="induction">
    <text evidence="3 10">Expression is repressed by RtcR.</text>
</comment>
<comment type="miscellaneous">
    <text evidence="13 14 15">Ligation proceeds through 3 nucleotidyl transfer steps, with 2',3'-cyclic phosphate termini being hydrolyzed to 3'-P termini in a step that precedes 3'-P activation with GMP. In the first nucleotidyl transfer step, RtcB reacts with GTP to form a covalent RtcB-histidine-GMP intermediate with release of PPi; in the second step, the GMP moiety is transferred to the RNA 3'-P; in the third step, the 5'-OH from the opposite RNA strand attacks the activated 3'-P to form a 3',5'-phosphodiester bond and release GMP (PubMed:22474365, PubMed:26858100). Acts as a DNA ligase by attaching a GMP nucleotide to a DNA 3'-P to form a 'capped' 3' end structure, DNA3'pp5'G. When a suitable DNA 5'-OH end is available, RtcB catalyzes attack of the 5'-OH on DNA3'pp5'G to form a 3'-5' phosphodiester splice junction (PubMed:24218597).</text>
</comment>
<comment type="similarity">
    <text evidence="12">Belongs to the RtcB family.</text>
</comment>
<evidence type="ECO:0000250" key="1">
    <source>
        <dbReference type="UniProtKB" id="O59245"/>
    </source>
</evidence>
<evidence type="ECO:0000250" key="2">
    <source>
        <dbReference type="UniProtKB" id="P0DX92"/>
    </source>
</evidence>
<evidence type="ECO:0000269" key="3">
    <source>
    </source>
</evidence>
<evidence type="ECO:0000269" key="4">
    <source>
    </source>
</evidence>
<evidence type="ECO:0000269" key="5">
    <source>
    </source>
</evidence>
<evidence type="ECO:0000269" key="6">
    <source>
    </source>
</evidence>
<evidence type="ECO:0000269" key="7">
    <source>
    </source>
</evidence>
<evidence type="ECO:0000269" key="8">
    <source>
    </source>
</evidence>
<evidence type="ECO:0000269" key="9">
    <source>
    </source>
</evidence>
<evidence type="ECO:0000269" key="10">
    <source>
    </source>
</evidence>
<evidence type="ECO:0000303" key="11">
    <source>
    </source>
</evidence>
<evidence type="ECO:0000305" key="12"/>
<evidence type="ECO:0000305" key="13">
    <source>
    </source>
</evidence>
<evidence type="ECO:0000305" key="14">
    <source>
    </source>
</evidence>
<evidence type="ECO:0000305" key="15">
    <source>
    </source>
</evidence>
<gene>
    <name evidence="11" type="primary">rtcB</name>
    <name type="synonym">yhgL</name>
    <name type="ordered locus">b3421</name>
    <name type="ordered locus">JW3384</name>
</gene>
<sequence>MNYELLTTENAPVKMWTKGVPVEADARQQLINTAKMPFIFKHIAVMPDVHLGKGSTIGSVIPTKGAIIPAAVGVDIGCGMNALRTALTAEDLPENLAELRQAIETAVPHGRTTGRCKRDKGAWENPPVNVDAKWAELEAGYQWLTQKYPRFLNTNNYKHLGTLGTGNHFIEICLDESDQVWIMLHSGSRGIGNAIGTYFIDLAQKEMQETLETLPSRDLAYFMEGTEYFDDYLKAVAWAQLFASLNRDAMMENVVTALQSITQKTVRQPQTLAMEEINCHHNYVQKEQHFGEEIYVTRKGAVSARAGQYGIIPGSMGAKSFIVRGLGNEESFCSCSHGAGRVMSRTKAKKLFSVEDQIRATAHVECRKDAEVIDEIPMAYKDIDAVMAAQSDLVEVIYTLRQVVCVKG</sequence>